<keyword id="KW-0009">Actin-binding</keyword>
<keyword id="KW-0965">Cell junction</keyword>
<keyword id="KW-1003">Cell membrane</keyword>
<keyword id="KW-0966">Cell projection</keyword>
<keyword id="KW-0175">Coiled coil</keyword>
<keyword id="KW-0963">Cytoplasm</keyword>
<keyword id="KW-0968">Cytoplasmic vesicle</keyword>
<keyword id="KW-0206">Cytoskeleton</keyword>
<keyword id="KW-0967">Endosome</keyword>
<keyword id="KW-0333">Golgi apparatus</keyword>
<keyword id="KW-0472">Membrane</keyword>
<keyword id="KW-1185">Reference proteome</keyword>
<keyword id="KW-0728">SH3 domain</keyword>
<keyword id="KW-0770">Synapse</keyword>
<keyword id="KW-0813">Transport</keyword>
<reference key="1">
    <citation type="submission" date="2004-06" db="EMBL/GenBank/DDBJ databases">
        <authorList>
            <consortium name="NIH - Xenopus Gene Collection (XGC) project"/>
        </authorList>
    </citation>
    <scope>NUCLEOTIDE SEQUENCE [LARGE SCALE MRNA]</scope>
    <source>
        <tissue>Eye</tissue>
    </source>
</reference>
<name>DBNLB_XENLA</name>
<proteinExistence type="evidence at transcript level"/>
<feature type="chain" id="PRO_0000348227" description="Drebrin-like protein B">
    <location>
        <begin position="1"/>
        <end position="376"/>
    </location>
</feature>
<feature type="domain" description="ADF-H" evidence="7">
    <location>
        <begin position="2"/>
        <end position="133"/>
    </location>
</feature>
<feature type="domain" description="SH3" evidence="6">
    <location>
        <begin position="317"/>
        <end position="376"/>
    </location>
</feature>
<feature type="region of interest" description="Disordered" evidence="8">
    <location>
        <begin position="202"/>
        <end position="288"/>
    </location>
</feature>
<feature type="coiled-coil region" evidence="5">
    <location>
        <begin position="175"/>
        <end position="231"/>
    </location>
</feature>
<feature type="compositionally biased region" description="Basic and acidic residues" evidence="8">
    <location>
        <begin position="202"/>
        <end position="242"/>
    </location>
</feature>
<feature type="compositionally biased region" description="Polar residues" evidence="8">
    <location>
        <begin position="268"/>
        <end position="283"/>
    </location>
</feature>
<protein>
    <recommendedName>
        <fullName>Drebrin-like protein B</fullName>
    </recommendedName>
</protein>
<accession>Q6GM14</accession>
<dbReference type="EMBL" id="BC074277">
    <property type="protein sequence ID" value="AAH74277.1"/>
    <property type="molecule type" value="mRNA"/>
</dbReference>
<dbReference type="RefSeq" id="NP_001086163.1">
    <property type="nucleotide sequence ID" value="NM_001092694.1"/>
</dbReference>
<dbReference type="SMR" id="Q6GM14"/>
<dbReference type="GeneID" id="444592"/>
<dbReference type="KEGG" id="xla:444592"/>
<dbReference type="AGR" id="Xenbase:XB-GENE-494570"/>
<dbReference type="CTD" id="444592"/>
<dbReference type="Xenbase" id="XB-GENE-494570">
    <property type="gene designation" value="dbnl.S"/>
</dbReference>
<dbReference type="OrthoDB" id="5971719at2759"/>
<dbReference type="Proteomes" id="UP000186698">
    <property type="component" value="Chromosome 3S"/>
</dbReference>
<dbReference type="Bgee" id="444592">
    <property type="expression patterns" value="Expressed in brain and 20 other cell types or tissues"/>
</dbReference>
<dbReference type="GO" id="GO:0005884">
    <property type="term" value="C:actin filament"/>
    <property type="evidence" value="ECO:0007669"/>
    <property type="project" value="TreeGrafter"/>
</dbReference>
<dbReference type="GO" id="GO:0070161">
    <property type="term" value="C:anchoring junction"/>
    <property type="evidence" value="ECO:0007669"/>
    <property type="project" value="UniProtKB-KW"/>
</dbReference>
<dbReference type="GO" id="GO:0030665">
    <property type="term" value="C:clathrin-coated vesicle membrane"/>
    <property type="evidence" value="ECO:0007669"/>
    <property type="project" value="UniProtKB-SubCell"/>
</dbReference>
<dbReference type="GO" id="GO:0030864">
    <property type="term" value="C:cortical actin cytoskeleton"/>
    <property type="evidence" value="ECO:0000318"/>
    <property type="project" value="GO_Central"/>
</dbReference>
<dbReference type="GO" id="GO:0005829">
    <property type="term" value="C:cytosol"/>
    <property type="evidence" value="ECO:0007669"/>
    <property type="project" value="UniProtKB-SubCell"/>
</dbReference>
<dbReference type="GO" id="GO:0030425">
    <property type="term" value="C:dendrite"/>
    <property type="evidence" value="ECO:0000318"/>
    <property type="project" value="GO_Central"/>
</dbReference>
<dbReference type="GO" id="GO:0005769">
    <property type="term" value="C:early endosome"/>
    <property type="evidence" value="ECO:0007669"/>
    <property type="project" value="UniProtKB-SubCell"/>
</dbReference>
<dbReference type="GO" id="GO:0000139">
    <property type="term" value="C:Golgi membrane"/>
    <property type="evidence" value="ECO:0007669"/>
    <property type="project" value="UniProtKB-SubCell"/>
</dbReference>
<dbReference type="GO" id="GO:0030027">
    <property type="term" value="C:lamellipodium"/>
    <property type="evidence" value="ECO:0000318"/>
    <property type="project" value="GO_Central"/>
</dbReference>
<dbReference type="GO" id="GO:0043204">
    <property type="term" value="C:perikaryon"/>
    <property type="evidence" value="ECO:0007669"/>
    <property type="project" value="UniProtKB-SubCell"/>
</dbReference>
<dbReference type="GO" id="GO:0002102">
    <property type="term" value="C:podosome"/>
    <property type="evidence" value="ECO:0007669"/>
    <property type="project" value="UniProtKB-SubCell"/>
</dbReference>
<dbReference type="GO" id="GO:0014069">
    <property type="term" value="C:postsynaptic density"/>
    <property type="evidence" value="ECO:0000318"/>
    <property type="project" value="GO_Central"/>
</dbReference>
<dbReference type="GO" id="GO:0045211">
    <property type="term" value="C:postsynaptic membrane"/>
    <property type="evidence" value="ECO:0000318"/>
    <property type="project" value="GO_Central"/>
</dbReference>
<dbReference type="GO" id="GO:0001726">
    <property type="term" value="C:ruffle"/>
    <property type="evidence" value="ECO:0007669"/>
    <property type="project" value="UniProtKB-SubCell"/>
</dbReference>
<dbReference type="GO" id="GO:0030427">
    <property type="term" value="C:site of polarized growth"/>
    <property type="evidence" value="ECO:0000318"/>
    <property type="project" value="GO_Central"/>
</dbReference>
<dbReference type="GO" id="GO:0051015">
    <property type="term" value="F:actin filament binding"/>
    <property type="evidence" value="ECO:0000318"/>
    <property type="project" value="GO_Central"/>
</dbReference>
<dbReference type="GO" id="GO:0048812">
    <property type="term" value="P:neuron projection morphogenesis"/>
    <property type="evidence" value="ECO:0000318"/>
    <property type="project" value="GO_Central"/>
</dbReference>
<dbReference type="GO" id="GO:0045773">
    <property type="term" value="P:positive regulation of axon extension"/>
    <property type="evidence" value="ECO:0000318"/>
    <property type="project" value="GO_Central"/>
</dbReference>
<dbReference type="GO" id="GO:0061003">
    <property type="term" value="P:positive regulation of dendritic spine morphogenesis"/>
    <property type="evidence" value="ECO:0000318"/>
    <property type="project" value="GO_Central"/>
</dbReference>
<dbReference type="GO" id="GO:0098974">
    <property type="term" value="P:postsynaptic actin cytoskeleton organization"/>
    <property type="evidence" value="ECO:0000318"/>
    <property type="project" value="GO_Central"/>
</dbReference>
<dbReference type="GO" id="GO:0030833">
    <property type="term" value="P:regulation of actin filament polymerization"/>
    <property type="evidence" value="ECO:0000318"/>
    <property type="project" value="GO_Central"/>
</dbReference>
<dbReference type="CDD" id="cd11281">
    <property type="entry name" value="ADF_drebrin_like"/>
    <property type="match status" value="1"/>
</dbReference>
<dbReference type="CDD" id="cd11960">
    <property type="entry name" value="SH3_Abp1_eu"/>
    <property type="match status" value="1"/>
</dbReference>
<dbReference type="FunFam" id="3.40.20.10:FF:000011">
    <property type="entry name" value="Drebrin-like protein B"/>
    <property type="match status" value="1"/>
</dbReference>
<dbReference type="FunFam" id="2.30.30.40:FF:000046">
    <property type="entry name" value="Drebrin-like protein isoform B"/>
    <property type="match status" value="1"/>
</dbReference>
<dbReference type="Gene3D" id="3.40.20.10">
    <property type="entry name" value="Severin"/>
    <property type="match status" value="1"/>
</dbReference>
<dbReference type="Gene3D" id="2.30.30.40">
    <property type="entry name" value="SH3 Domains"/>
    <property type="match status" value="1"/>
</dbReference>
<dbReference type="InterPro" id="IPR002108">
    <property type="entry name" value="ADF-H"/>
</dbReference>
<dbReference type="InterPro" id="IPR029006">
    <property type="entry name" value="ADF-H/Gelsolin-like_dom_sf"/>
</dbReference>
<dbReference type="InterPro" id="IPR035717">
    <property type="entry name" value="Drebrin-like_SH3"/>
</dbReference>
<dbReference type="InterPro" id="IPR036028">
    <property type="entry name" value="SH3-like_dom_sf"/>
</dbReference>
<dbReference type="InterPro" id="IPR001452">
    <property type="entry name" value="SH3_domain"/>
</dbReference>
<dbReference type="PANTHER" id="PTHR10829">
    <property type="entry name" value="CORTACTIN AND DREBRIN"/>
    <property type="match status" value="1"/>
</dbReference>
<dbReference type="PANTHER" id="PTHR10829:SF12">
    <property type="entry name" value="DREBRIN-LIKE PROTEIN"/>
    <property type="match status" value="1"/>
</dbReference>
<dbReference type="Pfam" id="PF00241">
    <property type="entry name" value="Cofilin_ADF"/>
    <property type="match status" value="1"/>
</dbReference>
<dbReference type="Pfam" id="PF14604">
    <property type="entry name" value="SH3_9"/>
    <property type="match status" value="1"/>
</dbReference>
<dbReference type="PRINTS" id="PR00452">
    <property type="entry name" value="SH3DOMAIN"/>
</dbReference>
<dbReference type="SMART" id="SM00102">
    <property type="entry name" value="ADF"/>
    <property type="match status" value="1"/>
</dbReference>
<dbReference type="SMART" id="SM00326">
    <property type="entry name" value="SH3"/>
    <property type="match status" value="1"/>
</dbReference>
<dbReference type="SUPFAM" id="SSF55753">
    <property type="entry name" value="Actin depolymerizing proteins"/>
    <property type="match status" value="1"/>
</dbReference>
<dbReference type="SUPFAM" id="SSF50044">
    <property type="entry name" value="SH3-domain"/>
    <property type="match status" value="1"/>
</dbReference>
<dbReference type="PROSITE" id="PS51263">
    <property type="entry name" value="ADF_H"/>
    <property type="match status" value="1"/>
</dbReference>
<dbReference type="PROSITE" id="PS50002">
    <property type="entry name" value="SH3"/>
    <property type="match status" value="1"/>
</dbReference>
<sequence length="376" mass="42767">MSVNLSKNGAALQAAYKDVLDEKTKTDWALYTYEGNSNDIRLAETGDGGLEELVEELSSGKVMYAFCRVKDPNSGLPKFVLINWTGEGVKDARKGMCANHVSTMASFLKGAHVTINARAEEDVEPESIMEKVAKASGANYNFHKESNRGNEGPQGPVGSVYQKTNAMSEIKRVGKENFWAKAEKDEEERRIEEHRRANVEKDRLERERKEREQREAEERERRFRERSKEIDGHRKQQEEVEKQQTVPASQRSVNPREMFLQKERSLPESGSVSAQPEQFTASQQEEENIYQDATENQNIYEDTPQEDPVYETGVAEDSGMCARALYDYQAADDTEISFDPDDVIIQIEMIDDGWWRGVAPSGHFGMFPANYVELLE</sequence>
<gene>
    <name type="primary">dbnl-b</name>
</gene>
<comment type="function">
    <text evidence="1">Adapter protein that binds F-actin and dynamin, and thereby plays a role in receptor-mediated endocytosis. Plays a role in the reorganization of the actin cytoskeleton, formation of cell projections, such as neurites, in neuron morphogenesis and synapse formation. Does not bind G-actin and promote actin polymerization by itself, but excerts its functions by interaction with other proteins. Required for the formation of organized podosome rosettes (By similarity).</text>
</comment>
<comment type="subcellular location">
    <subcellularLocation>
        <location evidence="2">Cytoplasm</location>
        <location evidence="2">Cytoskeleton</location>
    </subcellularLocation>
    <subcellularLocation>
        <location evidence="2">Cell projection</location>
        <location evidence="2">Lamellipodium</location>
    </subcellularLocation>
    <subcellularLocation>
        <location evidence="2">Cell projection</location>
        <location evidence="2">Ruffle</location>
    </subcellularLocation>
    <subcellularLocation>
        <location evidence="2">Cytoplasm</location>
        <location evidence="2">Cell cortex</location>
    </subcellularLocation>
    <subcellularLocation>
        <location evidence="3">Cytoplasm</location>
        <location evidence="3">Cytosol</location>
    </subcellularLocation>
    <subcellularLocation>
        <location evidence="2">Synapse</location>
    </subcellularLocation>
    <subcellularLocation>
        <location evidence="2">Perikaryon</location>
    </subcellularLocation>
    <subcellularLocation>
        <location evidence="2">Cell projection</location>
        <location evidence="2">Neuron projection</location>
    </subcellularLocation>
    <subcellularLocation>
        <location evidence="3">Cell membrane</location>
        <topology evidence="2">Peripheral membrane protein</topology>
        <orientation evidence="2">Cytoplasmic side</orientation>
    </subcellularLocation>
    <subcellularLocation>
        <location evidence="2">Cytoplasmic vesicle</location>
        <location evidence="2">Clathrin-coated vesicle membrane</location>
        <topology evidence="2">Peripheral membrane protein</topology>
        <orientation evidence="2">Cytoplasmic side</orientation>
    </subcellularLocation>
    <subcellularLocation>
        <location evidence="2">Golgi apparatus membrane</location>
        <topology evidence="2">Peripheral membrane protein</topology>
        <orientation evidence="2">Cytoplasmic side</orientation>
    </subcellularLocation>
    <subcellularLocation>
        <location evidence="2">Cell projection</location>
        <location evidence="2">Podosome</location>
    </subcellularLocation>
    <subcellularLocation>
        <location evidence="4">Early endosome</location>
    </subcellularLocation>
    <subcellularLocation>
        <location evidence="3">Cell projection</location>
        <location evidence="3">Dendrite</location>
    </subcellularLocation>
    <subcellularLocation>
        <location evidence="3">Postsynaptic density</location>
    </subcellularLocation>
</comment>
<comment type="similarity">
    <text evidence="9">Belongs to the ABP1 family.</text>
</comment>
<organism>
    <name type="scientific">Xenopus laevis</name>
    <name type="common">African clawed frog</name>
    <dbReference type="NCBI Taxonomy" id="8355"/>
    <lineage>
        <taxon>Eukaryota</taxon>
        <taxon>Metazoa</taxon>
        <taxon>Chordata</taxon>
        <taxon>Craniata</taxon>
        <taxon>Vertebrata</taxon>
        <taxon>Euteleostomi</taxon>
        <taxon>Amphibia</taxon>
        <taxon>Batrachia</taxon>
        <taxon>Anura</taxon>
        <taxon>Pipoidea</taxon>
        <taxon>Pipidae</taxon>
        <taxon>Xenopodinae</taxon>
        <taxon>Xenopus</taxon>
        <taxon>Xenopus</taxon>
    </lineage>
</organism>
<evidence type="ECO:0000250" key="1"/>
<evidence type="ECO:0000250" key="2">
    <source>
        <dbReference type="UniProtKB" id="Q62418"/>
    </source>
</evidence>
<evidence type="ECO:0000250" key="3">
    <source>
        <dbReference type="UniProtKB" id="Q9JHL4"/>
    </source>
</evidence>
<evidence type="ECO:0000250" key="4">
    <source>
        <dbReference type="UniProtKB" id="Q9UJU6"/>
    </source>
</evidence>
<evidence type="ECO:0000255" key="5"/>
<evidence type="ECO:0000255" key="6">
    <source>
        <dbReference type="PROSITE-ProRule" id="PRU00192"/>
    </source>
</evidence>
<evidence type="ECO:0000255" key="7">
    <source>
        <dbReference type="PROSITE-ProRule" id="PRU00599"/>
    </source>
</evidence>
<evidence type="ECO:0000256" key="8">
    <source>
        <dbReference type="SAM" id="MobiDB-lite"/>
    </source>
</evidence>
<evidence type="ECO:0000305" key="9"/>